<organism>
    <name type="scientific">Human papillomavirus 65</name>
    <dbReference type="NCBI Taxonomy" id="28312"/>
    <lineage>
        <taxon>Viruses</taxon>
        <taxon>Monodnaviria</taxon>
        <taxon>Shotokuvirae</taxon>
        <taxon>Cossaviricota</taxon>
        <taxon>Papovaviricetes</taxon>
        <taxon>Zurhausenvirales</taxon>
        <taxon>Papillomaviridae</taxon>
        <taxon>Firstpapillomavirinae</taxon>
        <taxon>Gammapapillomavirus</taxon>
        <taxon>Gammapapillomavirus 1</taxon>
    </lineage>
</organism>
<name>VE6_HPV65</name>
<organismHost>
    <name type="scientific">Homo sapiens</name>
    <name type="common">Human</name>
    <dbReference type="NCBI Taxonomy" id="9606"/>
</organismHost>
<accession>Q07856</accession>
<gene>
    <name evidence="1" type="primary">E6</name>
</gene>
<evidence type="ECO:0000255" key="1">
    <source>
        <dbReference type="HAMAP-Rule" id="MF_04006"/>
    </source>
</evidence>
<evidence type="ECO:0000305" key="2"/>
<keyword id="KW-0010">Activator</keyword>
<keyword id="KW-0238">DNA-binding</keyword>
<keyword id="KW-0244">Early protein</keyword>
<keyword id="KW-1035">Host cytoplasm</keyword>
<keyword id="KW-1048">Host nucleus</keyword>
<keyword id="KW-0945">Host-virus interaction</keyword>
<keyword id="KW-1090">Inhibition of host innate immune response by virus</keyword>
<keyword id="KW-0479">Metal-binding</keyword>
<keyword id="KW-1119">Modulation of host cell apoptosis by virus</keyword>
<keyword id="KW-0804">Transcription</keyword>
<keyword id="KW-0805">Transcription regulation</keyword>
<keyword id="KW-0899">Viral immunoevasion</keyword>
<keyword id="KW-0862">Zinc</keyword>
<keyword id="KW-0863">Zinc-finger</keyword>
<proteinExistence type="inferred from homology"/>
<reference key="1">
    <citation type="journal article" date="1993" name="Virology">
        <title>Two novel types of human papillomavirus, HPV 63 and HPV 65: comparisons of their clinical and histological features and DNA sequences to other HPV types.</title>
        <authorList>
            <person name="Egawa K."/>
            <person name="Delius H."/>
            <person name="Matsukura T."/>
            <person name="Kawashima M."/>
            <person name="de Villiers E.M."/>
        </authorList>
    </citation>
    <scope>NUCLEOTIDE SEQUENCE [GENOMIC DNA]</scope>
</reference>
<protein>
    <recommendedName>
        <fullName evidence="1">Protein E6</fullName>
    </recommendedName>
</protein>
<sequence>MADGRPAALDDFCRRFDISFFDLHLTCIFCSHTVDLQDLASFYLKKLSLVFRGGCYYACCSECLRLSARFEQENYFQCSIKAVNLEEVAQRKIKEICIRCICCLRLLDIVEKLDLLYSDQACYLIRGLWRGYCRNCIRKQ</sequence>
<dbReference type="EMBL" id="X70829">
    <property type="protein sequence ID" value="CAA50171.1"/>
    <property type="molecule type" value="Genomic_DNA"/>
</dbReference>
<dbReference type="SMR" id="Q07856"/>
<dbReference type="Proteomes" id="UP000007672">
    <property type="component" value="Genome"/>
</dbReference>
<dbReference type="GO" id="GO:0030430">
    <property type="term" value="C:host cell cytoplasm"/>
    <property type="evidence" value="ECO:0007669"/>
    <property type="project" value="UniProtKB-SubCell"/>
</dbReference>
<dbReference type="GO" id="GO:0042025">
    <property type="term" value="C:host cell nucleus"/>
    <property type="evidence" value="ECO:0007669"/>
    <property type="project" value="UniProtKB-SubCell"/>
</dbReference>
<dbReference type="GO" id="GO:0003677">
    <property type="term" value="F:DNA binding"/>
    <property type="evidence" value="ECO:0007669"/>
    <property type="project" value="UniProtKB-UniRule"/>
</dbReference>
<dbReference type="GO" id="GO:0008270">
    <property type="term" value="F:zinc ion binding"/>
    <property type="evidence" value="ECO:0007669"/>
    <property type="project" value="UniProtKB-KW"/>
</dbReference>
<dbReference type="GO" id="GO:0006351">
    <property type="term" value="P:DNA-templated transcription"/>
    <property type="evidence" value="ECO:0007669"/>
    <property type="project" value="UniProtKB-UniRule"/>
</dbReference>
<dbReference type="GO" id="GO:0006355">
    <property type="term" value="P:regulation of DNA-templated transcription"/>
    <property type="evidence" value="ECO:0007669"/>
    <property type="project" value="UniProtKB-UniRule"/>
</dbReference>
<dbReference type="GO" id="GO:0052150">
    <property type="term" value="P:symbiont-mediated perturbation of host apoptosis"/>
    <property type="evidence" value="ECO:0007669"/>
    <property type="project" value="UniProtKB-KW"/>
</dbReference>
<dbReference type="GO" id="GO:0039648">
    <property type="term" value="P:symbiont-mediated perturbation of host ubiquitin-like protein modification"/>
    <property type="evidence" value="ECO:0007669"/>
    <property type="project" value="UniProtKB-UniRule"/>
</dbReference>
<dbReference type="GO" id="GO:0052170">
    <property type="term" value="P:symbiont-mediated suppression of host innate immune response"/>
    <property type="evidence" value="ECO:0007669"/>
    <property type="project" value="UniProtKB-KW"/>
</dbReference>
<dbReference type="GO" id="GO:0039502">
    <property type="term" value="P:symbiont-mediated suppression of host type I interferon-mediated signaling pathway"/>
    <property type="evidence" value="ECO:0007669"/>
    <property type="project" value="UniProtKB-UniRule"/>
</dbReference>
<dbReference type="Gene3D" id="3.30.240.40">
    <property type="entry name" value="E6 early regulatory protein"/>
    <property type="match status" value="2"/>
</dbReference>
<dbReference type="HAMAP" id="MF_04006">
    <property type="entry name" value="HPV_E6"/>
    <property type="match status" value="1"/>
</dbReference>
<dbReference type="InterPro" id="IPR001334">
    <property type="entry name" value="E6"/>
</dbReference>
<dbReference type="InterPro" id="IPR038575">
    <property type="entry name" value="E6_sf"/>
</dbReference>
<dbReference type="Pfam" id="PF00518">
    <property type="entry name" value="E6"/>
    <property type="match status" value="1"/>
</dbReference>
<dbReference type="SUPFAM" id="SSF161229">
    <property type="entry name" value="E6 C-terminal domain-like"/>
    <property type="match status" value="2"/>
</dbReference>
<comment type="function">
    <text evidence="1">Plays a major role in the induction and maintenance of cellular transformation. E6 associates with host UBE3A/E6-AP ubiquitin-protein ligase and modulates its activity. Protects host keratinocytes from apoptosis by mediating the degradation of host BAK1. May also inhibit host immune response.</text>
</comment>
<comment type="subunit">
    <text evidence="1">Forms homodimers. Interacts with ubiquitin-protein ligase UBE3A/E6-AP; this interaction stimulates UBE3A ubiquitin activity. Interacts with host BAK1.</text>
</comment>
<comment type="subcellular location">
    <subcellularLocation>
        <location evidence="1">Host cytoplasm</location>
    </subcellularLocation>
    <subcellularLocation>
        <location evidence="1">Host nucleus</location>
    </subcellularLocation>
</comment>
<comment type="similarity">
    <text evidence="1 2">Belongs to the papillomaviridae E6 protein family.</text>
</comment>
<feature type="chain" id="PRO_0000133378" description="Protein E6">
    <location>
        <begin position="1"/>
        <end position="140"/>
    </location>
</feature>
<feature type="zinc finger region" evidence="1">
    <location>
        <begin position="27"/>
        <end position="63"/>
    </location>
</feature>
<feature type="zinc finger region" evidence="1">
    <location>
        <begin position="100"/>
        <end position="136"/>
    </location>
</feature>